<evidence type="ECO:0000250" key="1"/>
<evidence type="ECO:0000255" key="2">
    <source>
        <dbReference type="HAMAP-Rule" id="MF_02121"/>
    </source>
</evidence>
<reference key="1">
    <citation type="journal article" date="2002" name="Nucleic Acids Res.">
        <title>Genome sequence of Shigella flexneri 2a: insights into pathogenicity through comparison with genomes of Escherichia coli K12 and O157.</title>
        <authorList>
            <person name="Jin Q."/>
            <person name="Yuan Z."/>
            <person name="Xu J."/>
            <person name="Wang Y."/>
            <person name="Shen Y."/>
            <person name="Lu W."/>
            <person name="Wang J."/>
            <person name="Liu H."/>
            <person name="Yang J."/>
            <person name="Yang F."/>
            <person name="Zhang X."/>
            <person name="Zhang J."/>
            <person name="Yang G."/>
            <person name="Wu H."/>
            <person name="Qu D."/>
            <person name="Dong J."/>
            <person name="Sun L."/>
            <person name="Xue Y."/>
            <person name="Zhao A."/>
            <person name="Gao Y."/>
            <person name="Zhu J."/>
            <person name="Kan B."/>
            <person name="Ding K."/>
            <person name="Chen S."/>
            <person name="Cheng H."/>
            <person name="Yao Z."/>
            <person name="He B."/>
            <person name="Chen R."/>
            <person name="Ma D."/>
            <person name="Qiang B."/>
            <person name="Wen Y."/>
            <person name="Hou Y."/>
            <person name="Yu J."/>
        </authorList>
    </citation>
    <scope>NUCLEOTIDE SEQUENCE [LARGE SCALE GENOMIC DNA]</scope>
    <source>
        <strain>301 / Serotype 2a</strain>
    </source>
</reference>
<reference key="2">
    <citation type="journal article" date="2003" name="Infect. Immun.">
        <title>Complete genome sequence and comparative genomics of Shigella flexneri serotype 2a strain 2457T.</title>
        <authorList>
            <person name="Wei J."/>
            <person name="Goldberg M.B."/>
            <person name="Burland V."/>
            <person name="Venkatesan M.M."/>
            <person name="Deng W."/>
            <person name="Fournier G."/>
            <person name="Mayhew G.F."/>
            <person name="Plunkett G. III"/>
            <person name="Rose D.J."/>
            <person name="Darling A."/>
            <person name="Mau B."/>
            <person name="Perna N.T."/>
            <person name="Payne S.M."/>
            <person name="Runyen-Janecky L.J."/>
            <person name="Zhou S."/>
            <person name="Schwartz D.C."/>
            <person name="Blattner F.R."/>
        </authorList>
    </citation>
    <scope>NUCLEOTIDE SEQUENCE [LARGE SCALE GENOMIC DNA]</scope>
    <source>
        <strain>ATCC 700930 / 2457T / Serotype 2a</strain>
    </source>
</reference>
<name>DHAS_SHIFL</name>
<protein>
    <recommendedName>
        <fullName evidence="2">Aspartate-semialdehyde dehydrogenase</fullName>
        <shortName evidence="2">ASA dehydrogenase</shortName>
        <shortName evidence="2">ASADH</shortName>
        <ecNumber evidence="2">1.2.1.11</ecNumber>
    </recommendedName>
    <alternativeName>
        <fullName evidence="2">Aspartate-beta-semialdehyde dehydrogenase</fullName>
    </alternativeName>
</protein>
<organism>
    <name type="scientific">Shigella flexneri</name>
    <dbReference type="NCBI Taxonomy" id="623"/>
    <lineage>
        <taxon>Bacteria</taxon>
        <taxon>Pseudomonadati</taxon>
        <taxon>Pseudomonadota</taxon>
        <taxon>Gammaproteobacteria</taxon>
        <taxon>Enterobacterales</taxon>
        <taxon>Enterobacteriaceae</taxon>
        <taxon>Shigella</taxon>
    </lineage>
</organism>
<keyword id="KW-0028">Amino-acid biosynthesis</keyword>
<keyword id="KW-0220">Diaminopimelate biosynthesis</keyword>
<keyword id="KW-0457">Lysine biosynthesis</keyword>
<keyword id="KW-0486">Methionine biosynthesis</keyword>
<keyword id="KW-0521">NADP</keyword>
<keyword id="KW-0560">Oxidoreductase</keyword>
<keyword id="KW-1185">Reference proteome</keyword>
<keyword id="KW-0791">Threonine biosynthesis</keyword>
<gene>
    <name evidence="2" type="primary">asd</name>
    <name type="ordered locus">SF3456</name>
    <name type="ordered locus">S4307</name>
</gene>
<sequence length="367" mass="40018">MKNVGFIGWRGMVGSVLMQRMVEERDFDAIRPVFFSTSQLGQAAPSFGGTTGTLQDAFDLEALKALDIIVTCQGGDYTNEIYPKLRESGWQGYWIDAASSLRMKDDAIIILDPVNQDVITDGLNNGIRTFVGGNCTVSLMLMSLGGLFANDLVDWVSVATYQAASGGGARHMRELLTQMGHLYGHVADELATPSSAILDIERKVTTLTRSGELPVDNFGVPLAGSLIPWIDKQLDNGQSREEWKGQAETNKILNTSSVIPVDGLCVRVGALRCHSQAFTIKLKKDVSIPTVEELLAAHNPWAKVVPNDREITMRELTPAAVTGTLTTPVGRLRKLNMGPEFLSAFTVGDQLLWGAAEPLRRMLRQLA</sequence>
<proteinExistence type="inferred from homology"/>
<comment type="function">
    <text evidence="2">Catalyzes the NADPH-dependent formation of L-aspartate-semialdehyde (L-ASA) by the reductive dephosphorylation of L-aspartyl-4-phosphate.</text>
</comment>
<comment type="catalytic activity">
    <reaction evidence="2">
        <text>L-aspartate 4-semialdehyde + phosphate + NADP(+) = 4-phospho-L-aspartate + NADPH + H(+)</text>
        <dbReference type="Rhea" id="RHEA:24284"/>
        <dbReference type="ChEBI" id="CHEBI:15378"/>
        <dbReference type="ChEBI" id="CHEBI:43474"/>
        <dbReference type="ChEBI" id="CHEBI:57535"/>
        <dbReference type="ChEBI" id="CHEBI:57783"/>
        <dbReference type="ChEBI" id="CHEBI:58349"/>
        <dbReference type="ChEBI" id="CHEBI:537519"/>
        <dbReference type="EC" id="1.2.1.11"/>
    </reaction>
</comment>
<comment type="pathway">
    <text evidence="2">Amino-acid biosynthesis; L-lysine biosynthesis via DAP pathway; (S)-tetrahydrodipicolinate from L-aspartate: step 2/4.</text>
</comment>
<comment type="pathway">
    <text evidence="2">Amino-acid biosynthesis; L-methionine biosynthesis via de novo pathway; L-homoserine from L-aspartate: step 2/3.</text>
</comment>
<comment type="pathway">
    <text evidence="2">Amino-acid biosynthesis; L-threonine biosynthesis; L-threonine from L-aspartate: step 2/5.</text>
</comment>
<comment type="subunit">
    <text evidence="2">Homodimer.</text>
</comment>
<comment type="similarity">
    <text evidence="2">Belongs to the aspartate-semialdehyde dehydrogenase family.</text>
</comment>
<dbReference type="EC" id="1.2.1.11" evidence="2"/>
<dbReference type="EMBL" id="AE005674">
    <property type="protein sequence ID" value="AAN44916.2"/>
    <property type="molecule type" value="Genomic_DNA"/>
</dbReference>
<dbReference type="EMBL" id="AE014073">
    <property type="protein sequence ID" value="AAP19265.1"/>
    <property type="molecule type" value="Genomic_DNA"/>
</dbReference>
<dbReference type="RefSeq" id="NP_709209.2">
    <property type="nucleotide sequence ID" value="NC_004337.2"/>
</dbReference>
<dbReference type="RefSeq" id="WP_000799956.1">
    <property type="nucleotide sequence ID" value="NZ_WPGW01000010.1"/>
</dbReference>
<dbReference type="SMR" id="P0A9R1"/>
<dbReference type="STRING" id="198214.SF3456"/>
<dbReference type="PaxDb" id="198214-SF3456"/>
<dbReference type="GeneID" id="1026459"/>
<dbReference type="GeneID" id="75202278"/>
<dbReference type="KEGG" id="sfl:SF3456"/>
<dbReference type="KEGG" id="sfx:S4307"/>
<dbReference type="PATRIC" id="fig|198214.7.peg.4076"/>
<dbReference type="HOGENOM" id="CLU_066397_0_0_6"/>
<dbReference type="UniPathway" id="UPA00034">
    <property type="reaction ID" value="UER00016"/>
</dbReference>
<dbReference type="UniPathway" id="UPA00050">
    <property type="reaction ID" value="UER00463"/>
</dbReference>
<dbReference type="UniPathway" id="UPA00051">
    <property type="reaction ID" value="UER00464"/>
</dbReference>
<dbReference type="Proteomes" id="UP000001006">
    <property type="component" value="Chromosome"/>
</dbReference>
<dbReference type="Proteomes" id="UP000002673">
    <property type="component" value="Chromosome"/>
</dbReference>
<dbReference type="GO" id="GO:0004073">
    <property type="term" value="F:aspartate-semialdehyde dehydrogenase activity"/>
    <property type="evidence" value="ECO:0007669"/>
    <property type="project" value="UniProtKB-UniRule"/>
</dbReference>
<dbReference type="GO" id="GO:0051287">
    <property type="term" value="F:NAD binding"/>
    <property type="evidence" value="ECO:0007669"/>
    <property type="project" value="InterPro"/>
</dbReference>
<dbReference type="GO" id="GO:0050661">
    <property type="term" value="F:NADP binding"/>
    <property type="evidence" value="ECO:0007669"/>
    <property type="project" value="UniProtKB-UniRule"/>
</dbReference>
<dbReference type="GO" id="GO:0046983">
    <property type="term" value="F:protein dimerization activity"/>
    <property type="evidence" value="ECO:0007669"/>
    <property type="project" value="InterPro"/>
</dbReference>
<dbReference type="GO" id="GO:0071266">
    <property type="term" value="P:'de novo' L-methionine biosynthetic process"/>
    <property type="evidence" value="ECO:0007669"/>
    <property type="project" value="UniProtKB-UniRule"/>
</dbReference>
<dbReference type="GO" id="GO:0019877">
    <property type="term" value="P:diaminopimelate biosynthetic process"/>
    <property type="evidence" value="ECO:0007669"/>
    <property type="project" value="UniProtKB-UniRule"/>
</dbReference>
<dbReference type="GO" id="GO:0009097">
    <property type="term" value="P:isoleucine biosynthetic process"/>
    <property type="evidence" value="ECO:0007669"/>
    <property type="project" value="InterPro"/>
</dbReference>
<dbReference type="GO" id="GO:0009089">
    <property type="term" value="P:lysine biosynthetic process via diaminopimelate"/>
    <property type="evidence" value="ECO:0007669"/>
    <property type="project" value="UniProtKB-UniRule"/>
</dbReference>
<dbReference type="GO" id="GO:0009088">
    <property type="term" value="P:threonine biosynthetic process"/>
    <property type="evidence" value="ECO:0007669"/>
    <property type="project" value="UniProtKB-UniRule"/>
</dbReference>
<dbReference type="CDD" id="cd23938">
    <property type="entry name" value="ASADH_C_bac_like"/>
    <property type="match status" value="1"/>
</dbReference>
<dbReference type="CDD" id="cd02314">
    <property type="entry name" value="VcASADH1_like_N"/>
    <property type="match status" value="1"/>
</dbReference>
<dbReference type="FunFam" id="3.30.360.10:FF:000012">
    <property type="entry name" value="Aspartate-semialdehyde dehydrogenase"/>
    <property type="match status" value="1"/>
</dbReference>
<dbReference type="FunFam" id="3.40.50.720:FF:000152">
    <property type="entry name" value="Aspartate-semialdehyde dehydrogenase"/>
    <property type="match status" value="1"/>
</dbReference>
<dbReference type="Gene3D" id="3.30.360.10">
    <property type="entry name" value="Dihydrodipicolinate Reductase, domain 2"/>
    <property type="match status" value="1"/>
</dbReference>
<dbReference type="Gene3D" id="3.40.50.720">
    <property type="entry name" value="NAD(P)-binding Rossmann-like Domain"/>
    <property type="match status" value="1"/>
</dbReference>
<dbReference type="HAMAP" id="MF_02121">
    <property type="entry name" value="ASADH"/>
    <property type="match status" value="1"/>
</dbReference>
<dbReference type="InterPro" id="IPR000319">
    <property type="entry name" value="Asp-semialdehyde_DH_CS"/>
</dbReference>
<dbReference type="InterPro" id="IPR011534">
    <property type="entry name" value="Asp_ADH_gamma-type"/>
</dbReference>
<dbReference type="InterPro" id="IPR012080">
    <property type="entry name" value="Asp_semialdehyde_DH"/>
</dbReference>
<dbReference type="InterPro" id="IPR036291">
    <property type="entry name" value="NAD(P)-bd_dom_sf"/>
</dbReference>
<dbReference type="InterPro" id="IPR000534">
    <property type="entry name" value="Semialdehyde_DH_NAD-bd"/>
</dbReference>
<dbReference type="InterPro" id="IPR012280">
    <property type="entry name" value="Semialdhyde_DH_dimer_dom"/>
</dbReference>
<dbReference type="NCBIfam" id="TIGR01745">
    <property type="entry name" value="asd_gamma"/>
    <property type="match status" value="1"/>
</dbReference>
<dbReference type="NCBIfam" id="NF005144">
    <property type="entry name" value="PRK06598.1"/>
    <property type="match status" value="1"/>
</dbReference>
<dbReference type="PANTHER" id="PTHR46278:SF4">
    <property type="entry name" value="ASPARTATE-SEMIALDEHYDE DEHYDROGENASE"/>
    <property type="match status" value="1"/>
</dbReference>
<dbReference type="PANTHER" id="PTHR46278">
    <property type="entry name" value="DEHYDROGENASE, PUTATIVE-RELATED"/>
    <property type="match status" value="1"/>
</dbReference>
<dbReference type="Pfam" id="PF01118">
    <property type="entry name" value="Semialdhyde_dh"/>
    <property type="match status" value="1"/>
</dbReference>
<dbReference type="Pfam" id="PF02774">
    <property type="entry name" value="Semialdhyde_dhC"/>
    <property type="match status" value="1"/>
</dbReference>
<dbReference type="PIRSF" id="PIRSF000148">
    <property type="entry name" value="ASA_dh"/>
    <property type="match status" value="1"/>
</dbReference>
<dbReference type="SMART" id="SM00859">
    <property type="entry name" value="Semialdhyde_dh"/>
    <property type="match status" value="1"/>
</dbReference>
<dbReference type="SUPFAM" id="SSF55347">
    <property type="entry name" value="Glyceraldehyde-3-phosphate dehydrogenase-like, C-terminal domain"/>
    <property type="match status" value="1"/>
</dbReference>
<dbReference type="SUPFAM" id="SSF51735">
    <property type="entry name" value="NAD(P)-binding Rossmann-fold domains"/>
    <property type="match status" value="1"/>
</dbReference>
<dbReference type="PROSITE" id="PS01103">
    <property type="entry name" value="ASD"/>
    <property type="match status" value="1"/>
</dbReference>
<accession>P0A9R1</accession>
<accession>P00353</accession>
<feature type="chain" id="PRO_0000141374" description="Aspartate-semialdehyde dehydrogenase">
    <location>
        <begin position="1"/>
        <end position="367"/>
    </location>
</feature>
<feature type="active site" description="Acyl-thioester intermediate" evidence="2">
    <location>
        <position position="135"/>
    </location>
</feature>
<feature type="active site" description="Proton acceptor" evidence="2">
    <location>
        <position position="274"/>
    </location>
</feature>
<feature type="binding site" evidence="2">
    <location>
        <begin position="10"/>
        <end position="13"/>
    </location>
    <ligand>
        <name>NADP(+)</name>
        <dbReference type="ChEBI" id="CHEBI:58349"/>
    </ligand>
</feature>
<feature type="binding site" evidence="2">
    <location>
        <begin position="37"/>
        <end position="38"/>
    </location>
    <ligand>
        <name>NADP(+)</name>
        <dbReference type="ChEBI" id="CHEBI:58349"/>
    </ligand>
</feature>
<feature type="binding site" evidence="2">
    <location>
        <position position="73"/>
    </location>
    <ligand>
        <name>NADP(+)</name>
        <dbReference type="ChEBI" id="CHEBI:58349"/>
    </ligand>
</feature>
<feature type="binding site" evidence="2">
    <location>
        <position position="102"/>
    </location>
    <ligand>
        <name>phosphate</name>
        <dbReference type="ChEBI" id="CHEBI:43474"/>
    </ligand>
</feature>
<feature type="binding site" evidence="2">
    <location>
        <position position="162"/>
    </location>
    <ligand>
        <name>substrate</name>
    </ligand>
</feature>
<feature type="binding site" evidence="2">
    <location>
        <begin position="165"/>
        <end position="166"/>
    </location>
    <ligand>
        <name>NADP(+)</name>
        <dbReference type="ChEBI" id="CHEBI:58349"/>
    </ligand>
</feature>
<feature type="binding site" evidence="2">
    <location>
        <position position="193"/>
    </location>
    <ligand>
        <name>NADP(+)</name>
        <dbReference type="ChEBI" id="CHEBI:58349"/>
    </ligand>
</feature>
<feature type="binding site" evidence="2">
    <location>
        <position position="241"/>
    </location>
    <ligand>
        <name>substrate</name>
    </ligand>
</feature>
<feature type="binding site" evidence="2">
    <location>
        <position position="244"/>
    </location>
    <ligand>
        <name>phosphate</name>
        <dbReference type="ChEBI" id="CHEBI:43474"/>
    </ligand>
</feature>
<feature type="binding site" evidence="2">
    <location>
        <position position="267"/>
    </location>
    <ligand>
        <name>substrate</name>
    </ligand>
</feature>
<feature type="binding site" evidence="2">
    <location>
        <position position="350"/>
    </location>
    <ligand>
        <name>NADP(+)</name>
        <dbReference type="ChEBI" id="CHEBI:58349"/>
    </ligand>
</feature>
<feature type="modified residue" description="S-cysteinyl cysteine; in inhibited form" evidence="1">
    <location>
        <position position="135"/>
    </location>
</feature>